<protein>
    <recommendedName>
        <fullName evidence="1">Holliday junction branch migration complex subunit RuvA</fullName>
    </recommendedName>
</protein>
<reference key="1">
    <citation type="submission" date="2007-03" db="EMBL/GenBank/DDBJ databases">
        <title>Complete sequence of chromosome 1 of Burkholderia vietnamiensis G4.</title>
        <authorList>
            <consortium name="US DOE Joint Genome Institute"/>
            <person name="Copeland A."/>
            <person name="Lucas S."/>
            <person name="Lapidus A."/>
            <person name="Barry K."/>
            <person name="Detter J.C."/>
            <person name="Glavina del Rio T."/>
            <person name="Hammon N."/>
            <person name="Israni S."/>
            <person name="Dalin E."/>
            <person name="Tice H."/>
            <person name="Pitluck S."/>
            <person name="Chain P."/>
            <person name="Malfatti S."/>
            <person name="Shin M."/>
            <person name="Vergez L."/>
            <person name="Schmutz J."/>
            <person name="Larimer F."/>
            <person name="Land M."/>
            <person name="Hauser L."/>
            <person name="Kyrpides N."/>
            <person name="Tiedje J."/>
            <person name="Richardson P."/>
        </authorList>
    </citation>
    <scope>NUCLEOTIDE SEQUENCE [LARGE SCALE GENOMIC DNA]</scope>
    <source>
        <strain>G4 / LMG 22486</strain>
    </source>
</reference>
<gene>
    <name evidence="1" type="primary">ruvA</name>
    <name type="ordered locus">Bcep1808_0654</name>
</gene>
<keyword id="KW-0963">Cytoplasm</keyword>
<keyword id="KW-0227">DNA damage</keyword>
<keyword id="KW-0233">DNA recombination</keyword>
<keyword id="KW-0234">DNA repair</keyword>
<keyword id="KW-0238">DNA-binding</keyword>
<proteinExistence type="inferred from homology"/>
<accession>A4JBL3</accession>
<dbReference type="EMBL" id="CP000614">
    <property type="protein sequence ID" value="ABO53666.1"/>
    <property type="molecule type" value="Genomic_DNA"/>
</dbReference>
<dbReference type="SMR" id="A4JBL3"/>
<dbReference type="KEGG" id="bvi:Bcep1808_0654"/>
<dbReference type="eggNOG" id="COG0632">
    <property type="taxonomic scope" value="Bacteria"/>
</dbReference>
<dbReference type="HOGENOM" id="CLU_087936_0_0_4"/>
<dbReference type="Proteomes" id="UP000002287">
    <property type="component" value="Chromosome 1"/>
</dbReference>
<dbReference type="GO" id="GO:0005737">
    <property type="term" value="C:cytoplasm"/>
    <property type="evidence" value="ECO:0007669"/>
    <property type="project" value="UniProtKB-SubCell"/>
</dbReference>
<dbReference type="GO" id="GO:0009379">
    <property type="term" value="C:Holliday junction helicase complex"/>
    <property type="evidence" value="ECO:0007669"/>
    <property type="project" value="InterPro"/>
</dbReference>
<dbReference type="GO" id="GO:0048476">
    <property type="term" value="C:Holliday junction resolvase complex"/>
    <property type="evidence" value="ECO:0007669"/>
    <property type="project" value="UniProtKB-UniRule"/>
</dbReference>
<dbReference type="GO" id="GO:0005524">
    <property type="term" value="F:ATP binding"/>
    <property type="evidence" value="ECO:0007669"/>
    <property type="project" value="InterPro"/>
</dbReference>
<dbReference type="GO" id="GO:0000400">
    <property type="term" value="F:four-way junction DNA binding"/>
    <property type="evidence" value="ECO:0007669"/>
    <property type="project" value="UniProtKB-UniRule"/>
</dbReference>
<dbReference type="GO" id="GO:0009378">
    <property type="term" value="F:four-way junction helicase activity"/>
    <property type="evidence" value="ECO:0007669"/>
    <property type="project" value="InterPro"/>
</dbReference>
<dbReference type="GO" id="GO:0006310">
    <property type="term" value="P:DNA recombination"/>
    <property type="evidence" value="ECO:0007669"/>
    <property type="project" value="UniProtKB-UniRule"/>
</dbReference>
<dbReference type="GO" id="GO:0006281">
    <property type="term" value="P:DNA repair"/>
    <property type="evidence" value="ECO:0007669"/>
    <property type="project" value="UniProtKB-UniRule"/>
</dbReference>
<dbReference type="CDD" id="cd14332">
    <property type="entry name" value="UBA_RuvA_C"/>
    <property type="match status" value="1"/>
</dbReference>
<dbReference type="Gene3D" id="1.10.150.20">
    <property type="entry name" value="5' to 3' exonuclease, C-terminal subdomain"/>
    <property type="match status" value="1"/>
</dbReference>
<dbReference type="Gene3D" id="1.10.8.10">
    <property type="entry name" value="DNA helicase RuvA subunit, C-terminal domain"/>
    <property type="match status" value="1"/>
</dbReference>
<dbReference type="Gene3D" id="2.40.50.140">
    <property type="entry name" value="Nucleic acid-binding proteins"/>
    <property type="match status" value="1"/>
</dbReference>
<dbReference type="HAMAP" id="MF_00031">
    <property type="entry name" value="DNA_HJ_migration_RuvA"/>
    <property type="match status" value="1"/>
</dbReference>
<dbReference type="InterPro" id="IPR013849">
    <property type="entry name" value="DNA_helicase_Holl-junc_RuvA_I"/>
</dbReference>
<dbReference type="InterPro" id="IPR003583">
    <property type="entry name" value="Hlx-hairpin-Hlx_DNA-bd_motif"/>
</dbReference>
<dbReference type="InterPro" id="IPR012340">
    <property type="entry name" value="NA-bd_OB-fold"/>
</dbReference>
<dbReference type="InterPro" id="IPR000085">
    <property type="entry name" value="RuvA"/>
</dbReference>
<dbReference type="InterPro" id="IPR010994">
    <property type="entry name" value="RuvA_2-like"/>
</dbReference>
<dbReference type="InterPro" id="IPR011114">
    <property type="entry name" value="RuvA_C"/>
</dbReference>
<dbReference type="InterPro" id="IPR036267">
    <property type="entry name" value="RuvA_C_sf"/>
</dbReference>
<dbReference type="NCBIfam" id="TIGR00084">
    <property type="entry name" value="ruvA"/>
    <property type="match status" value="1"/>
</dbReference>
<dbReference type="Pfam" id="PF14520">
    <property type="entry name" value="HHH_5"/>
    <property type="match status" value="1"/>
</dbReference>
<dbReference type="Pfam" id="PF07499">
    <property type="entry name" value="RuvA_C"/>
    <property type="match status" value="1"/>
</dbReference>
<dbReference type="Pfam" id="PF01330">
    <property type="entry name" value="RuvA_N"/>
    <property type="match status" value="1"/>
</dbReference>
<dbReference type="SMART" id="SM00278">
    <property type="entry name" value="HhH1"/>
    <property type="match status" value="2"/>
</dbReference>
<dbReference type="SUPFAM" id="SSF46929">
    <property type="entry name" value="DNA helicase RuvA subunit, C-terminal domain"/>
    <property type="match status" value="1"/>
</dbReference>
<dbReference type="SUPFAM" id="SSF50249">
    <property type="entry name" value="Nucleic acid-binding proteins"/>
    <property type="match status" value="1"/>
</dbReference>
<dbReference type="SUPFAM" id="SSF47781">
    <property type="entry name" value="RuvA domain 2-like"/>
    <property type="match status" value="1"/>
</dbReference>
<organism>
    <name type="scientific">Burkholderia vietnamiensis (strain G4 / LMG 22486)</name>
    <name type="common">Burkholderia cepacia (strain R1808)</name>
    <dbReference type="NCBI Taxonomy" id="269482"/>
    <lineage>
        <taxon>Bacteria</taxon>
        <taxon>Pseudomonadati</taxon>
        <taxon>Pseudomonadota</taxon>
        <taxon>Betaproteobacteria</taxon>
        <taxon>Burkholderiales</taxon>
        <taxon>Burkholderiaceae</taxon>
        <taxon>Burkholderia</taxon>
        <taxon>Burkholderia cepacia complex</taxon>
    </lineage>
</organism>
<sequence length="193" mass="20353">MIGRIAGILLEKNPPHLLVDCNGVGYEIDVPMSTFYNLPQTGERVVLLTQQIVREDAHLLYGFLTPQERTTFRELLKITGIGARMALAVLSGMSVQELAQAVTMQDAARLTRLPGIGKKTAERLLLELKGKLGADLGALAGAASPSDHAADILNALVALGYSEKEGLAAIKNVPAGTGVSDGIKLALKALSKA</sequence>
<name>RUVA_BURVG</name>
<comment type="function">
    <text evidence="1">The RuvA-RuvB-RuvC complex processes Holliday junction (HJ) DNA during genetic recombination and DNA repair, while the RuvA-RuvB complex plays an important role in the rescue of blocked DNA replication forks via replication fork reversal (RFR). RuvA specifically binds to HJ cruciform DNA, conferring on it an open structure. The RuvB hexamer acts as an ATP-dependent pump, pulling dsDNA into and through the RuvAB complex. HJ branch migration allows RuvC to scan DNA until it finds its consensus sequence, where it cleaves and resolves the cruciform DNA.</text>
</comment>
<comment type="subunit">
    <text evidence="1">Homotetramer. Forms an RuvA(8)-RuvB(12)-Holliday junction (HJ) complex. HJ DNA is sandwiched between 2 RuvA tetramers; dsDNA enters through RuvA and exits via RuvB. An RuvB hexamer assembles on each DNA strand where it exits the tetramer. Each RuvB hexamer is contacted by two RuvA subunits (via domain III) on 2 adjacent RuvB subunits; this complex drives branch migration. In the full resolvosome a probable DNA-RuvA(4)-RuvB(12)-RuvC(2) complex forms which resolves the HJ.</text>
</comment>
<comment type="subcellular location">
    <subcellularLocation>
        <location evidence="1">Cytoplasm</location>
    </subcellularLocation>
</comment>
<comment type="domain">
    <text evidence="1">Has three domains with a flexible linker between the domains II and III and assumes an 'L' shape. Domain III is highly mobile and contacts RuvB.</text>
</comment>
<comment type="similarity">
    <text evidence="1">Belongs to the RuvA family.</text>
</comment>
<feature type="chain" id="PRO_1000002417" description="Holliday junction branch migration complex subunit RuvA">
    <location>
        <begin position="1"/>
        <end position="193"/>
    </location>
</feature>
<feature type="region of interest" description="Domain I" evidence="1">
    <location>
        <begin position="1"/>
        <end position="64"/>
    </location>
</feature>
<feature type="region of interest" description="Domain II" evidence="1">
    <location>
        <begin position="65"/>
        <end position="139"/>
    </location>
</feature>
<feature type="region of interest" description="Flexible linker" evidence="1">
    <location>
        <begin position="139"/>
        <end position="143"/>
    </location>
</feature>
<feature type="region of interest" description="Domain III" evidence="1">
    <location>
        <begin position="144"/>
        <end position="193"/>
    </location>
</feature>
<evidence type="ECO:0000255" key="1">
    <source>
        <dbReference type="HAMAP-Rule" id="MF_00031"/>
    </source>
</evidence>